<protein>
    <recommendedName>
        <fullName evidence="1">4-hydroxy-3-methylbut-2-enyl diphosphate reductase</fullName>
        <shortName evidence="1">HMBPP reductase</shortName>
        <ecNumber evidence="1">1.17.7.4</ecNumber>
    </recommendedName>
</protein>
<gene>
    <name evidence="1" type="primary">ispH</name>
    <name type="ordered locus">MCCL_1209</name>
</gene>
<name>ISPH_MACCJ</name>
<reference key="1">
    <citation type="journal article" date="2009" name="J. Bacteriol.">
        <title>Complete genome sequence of Macrococcus caseolyticus strain JCSCS5402, reflecting the ancestral genome of the human-pathogenic staphylococci.</title>
        <authorList>
            <person name="Baba T."/>
            <person name="Kuwahara-Arai K."/>
            <person name="Uchiyama I."/>
            <person name="Takeuchi F."/>
            <person name="Ito T."/>
            <person name="Hiramatsu K."/>
        </authorList>
    </citation>
    <scope>NUCLEOTIDE SEQUENCE [LARGE SCALE GENOMIC DNA]</scope>
    <source>
        <strain>JCSC5402</strain>
    </source>
</reference>
<keyword id="KW-0004">4Fe-4S</keyword>
<keyword id="KW-0408">Iron</keyword>
<keyword id="KW-0411">Iron-sulfur</keyword>
<keyword id="KW-0414">Isoprene biosynthesis</keyword>
<keyword id="KW-0479">Metal-binding</keyword>
<keyword id="KW-0560">Oxidoreductase</keyword>
<keyword id="KW-1185">Reference proteome</keyword>
<proteinExistence type="inferred from homology"/>
<sequence length="322" mass="35528">MEIIKITPRGYCYGVVDAMVIARNASLDKTLPRPIYILGMIVHNKHVTDAFESDGIITLDGPNRLEILEQIETGTVIFTAHGVSPEVKRRAKEKGLVCIDATCPDVENTHTLIRRKKADGYHVIYIGKKGHPEPEGAVGVAPDIVHLVENKQDIEQLPESLNDQKLIVTNQTTMSQWDVKHLMEDLEEKFPHIEVHKEICLATQVRQEAVANQAPSADVLIVVGDPKSNNSNRLAQVSKEIAHTEAYRISDISELKLEWLEGKSTIAVTAGASTPTPIVKEVIDYIKGYDPLNITPIPETSGVPVDKILPKIKNAAPVKILD</sequence>
<dbReference type="EC" id="1.17.7.4" evidence="1"/>
<dbReference type="EMBL" id="AP009484">
    <property type="protein sequence ID" value="BAH17916.1"/>
    <property type="molecule type" value="Genomic_DNA"/>
</dbReference>
<dbReference type="RefSeq" id="WP_012657114.1">
    <property type="nucleotide sequence ID" value="NC_011999.1"/>
</dbReference>
<dbReference type="SMR" id="B9E6U8"/>
<dbReference type="STRING" id="458233.MCCL_1209"/>
<dbReference type="KEGG" id="mcl:MCCL_1209"/>
<dbReference type="eggNOG" id="COG0761">
    <property type="taxonomic scope" value="Bacteria"/>
</dbReference>
<dbReference type="HOGENOM" id="CLU_027486_0_0_9"/>
<dbReference type="OrthoDB" id="9777362at2"/>
<dbReference type="UniPathway" id="UPA00056">
    <property type="reaction ID" value="UER00097"/>
</dbReference>
<dbReference type="UniPathway" id="UPA00059">
    <property type="reaction ID" value="UER00105"/>
</dbReference>
<dbReference type="Proteomes" id="UP000001383">
    <property type="component" value="Chromosome"/>
</dbReference>
<dbReference type="GO" id="GO:0051539">
    <property type="term" value="F:4 iron, 4 sulfur cluster binding"/>
    <property type="evidence" value="ECO:0007669"/>
    <property type="project" value="UniProtKB-UniRule"/>
</dbReference>
<dbReference type="GO" id="GO:0051745">
    <property type="term" value="F:4-hydroxy-3-methylbut-2-enyl diphosphate reductase activity"/>
    <property type="evidence" value="ECO:0007669"/>
    <property type="project" value="UniProtKB-UniRule"/>
</dbReference>
<dbReference type="GO" id="GO:0046872">
    <property type="term" value="F:metal ion binding"/>
    <property type="evidence" value="ECO:0007669"/>
    <property type="project" value="UniProtKB-KW"/>
</dbReference>
<dbReference type="GO" id="GO:0050992">
    <property type="term" value="P:dimethylallyl diphosphate biosynthetic process"/>
    <property type="evidence" value="ECO:0007669"/>
    <property type="project" value="UniProtKB-UniRule"/>
</dbReference>
<dbReference type="GO" id="GO:0019288">
    <property type="term" value="P:isopentenyl diphosphate biosynthetic process, methylerythritol 4-phosphate pathway"/>
    <property type="evidence" value="ECO:0007669"/>
    <property type="project" value="UniProtKB-UniRule"/>
</dbReference>
<dbReference type="GO" id="GO:0016114">
    <property type="term" value="P:terpenoid biosynthetic process"/>
    <property type="evidence" value="ECO:0007669"/>
    <property type="project" value="UniProtKB-UniRule"/>
</dbReference>
<dbReference type="CDD" id="cd13944">
    <property type="entry name" value="lytB_ispH"/>
    <property type="match status" value="1"/>
</dbReference>
<dbReference type="Gene3D" id="3.40.50.11270">
    <property type="match status" value="1"/>
</dbReference>
<dbReference type="Gene3D" id="3.40.1010.20">
    <property type="entry name" value="4-hydroxy-3-methylbut-2-enyl diphosphate reductase, catalytic domain"/>
    <property type="match status" value="2"/>
</dbReference>
<dbReference type="HAMAP" id="MF_00191">
    <property type="entry name" value="IspH"/>
    <property type="match status" value="1"/>
</dbReference>
<dbReference type="InterPro" id="IPR003451">
    <property type="entry name" value="LytB/IspH"/>
</dbReference>
<dbReference type="NCBIfam" id="TIGR00216">
    <property type="entry name" value="ispH_lytB"/>
    <property type="match status" value="1"/>
</dbReference>
<dbReference type="NCBIfam" id="NF002187">
    <property type="entry name" value="PRK01045.1-1"/>
    <property type="match status" value="1"/>
</dbReference>
<dbReference type="PANTHER" id="PTHR30426">
    <property type="entry name" value="4-HYDROXY-3-METHYLBUT-2-ENYL DIPHOSPHATE REDUCTASE"/>
    <property type="match status" value="1"/>
</dbReference>
<dbReference type="PANTHER" id="PTHR30426:SF0">
    <property type="entry name" value="4-HYDROXY-3-METHYLBUT-2-ENYL DIPHOSPHATE REDUCTASE"/>
    <property type="match status" value="1"/>
</dbReference>
<dbReference type="Pfam" id="PF02401">
    <property type="entry name" value="LYTB"/>
    <property type="match status" value="1"/>
</dbReference>
<evidence type="ECO:0000255" key="1">
    <source>
        <dbReference type="HAMAP-Rule" id="MF_00191"/>
    </source>
</evidence>
<accession>B9E6U8</accession>
<comment type="function">
    <text evidence="1">Catalyzes the conversion of 1-hydroxy-2-methyl-2-(E)-butenyl 4-diphosphate (HMBPP) into a mixture of isopentenyl diphosphate (IPP) and dimethylallyl diphosphate (DMAPP). Acts in the terminal step of the DOXP/MEP pathway for isoprenoid precursor biosynthesis.</text>
</comment>
<comment type="catalytic activity">
    <reaction evidence="1">
        <text>isopentenyl diphosphate + 2 oxidized [2Fe-2S]-[ferredoxin] + H2O = (2E)-4-hydroxy-3-methylbut-2-enyl diphosphate + 2 reduced [2Fe-2S]-[ferredoxin] + 2 H(+)</text>
        <dbReference type="Rhea" id="RHEA:24488"/>
        <dbReference type="Rhea" id="RHEA-COMP:10000"/>
        <dbReference type="Rhea" id="RHEA-COMP:10001"/>
        <dbReference type="ChEBI" id="CHEBI:15377"/>
        <dbReference type="ChEBI" id="CHEBI:15378"/>
        <dbReference type="ChEBI" id="CHEBI:33737"/>
        <dbReference type="ChEBI" id="CHEBI:33738"/>
        <dbReference type="ChEBI" id="CHEBI:128753"/>
        <dbReference type="ChEBI" id="CHEBI:128769"/>
        <dbReference type="EC" id="1.17.7.4"/>
    </reaction>
</comment>
<comment type="catalytic activity">
    <reaction evidence="1">
        <text>dimethylallyl diphosphate + 2 oxidized [2Fe-2S]-[ferredoxin] + H2O = (2E)-4-hydroxy-3-methylbut-2-enyl diphosphate + 2 reduced [2Fe-2S]-[ferredoxin] + 2 H(+)</text>
        <dbReference type="Rhea" id="RHEA:24825"/>
        <dbReference type="Rhea" id="RHEA-COMP:10000"/>
        <dbReference type="Rhea" id="RHEA-COMP:10001"/>
        <dbReference type="ChEBI" id="CHEBI:15377"/>
        <dbReference type="ChEBI" id="CHEBI:15378"/>
        <dbReference type="ChEBI" id="CHEBI:33737"/>
        <dbReference type="ChEBI" id="CHEBI:33738"/>
        <dbReference type="ChEBI" id="CHEBI:57623"/>
        <dbReference type="ChEBI" id="CHEBI:128753"/>
        <dbReference type="EC" id="1.17.7.4"/>
    </reaction>
</comment>
<comment type="cofactor">
    <cofactor evidence="1">
        <name>[4Fe-4S] cluster</name>
        <dbReference type="ChEBI" id="CHEBI:49883"/>
    </cofactor>
    <text evidence="1">Binds 1 [4Fe-4S] cluster per subunit.</text>
</comment>
<comment type="pathway">
    <text evidence="1">Isoprenoid biosynthesis; dimethylallyl diphosphate biosynthesis; dimethylallyl diphosphate from (2E)-4-hydroxy-3-methylbutenyl diphosphate: step 1/1.</text>
</comment>
<comment type="pathway">
    <text evidence="1">Isoprenoid biosynthesis; isopentenyl diphosphate biosynthesis via DXP pathway; isopentenyl diphosphate from 1-deoxy-D-xylulose 5-phosphate: step 6/6.</text>
</comment>
<comment type="similarity">
    <text evidence="1">Belongs to the IspH family.</text>
</comment>
<organism>
    <name type="scientific">Macrococcus caseolyticus (strain JCSC5402)</name>
    <name type="common">Macrococcoides caseolyticum</name>
    <dbReference type="NCBI Taxonomy" id="458233"/>
    <lineage>
        <taxon>Bacteria</taxon>
        <taxon>Bacillati</taxon>
        <taxon>Bacillota</taxon>
        <taxon>Bacilli</taxon>
        <taxon>Bacillales</taxon>
        <taxon>Staphylococcaceae</taxon>
        <taxon>Macrococcoides</taxon>
    </lineage>
</organism>
<feature type="chain" id="PRO_1000124288" description="4-hydroxy-3-methylbut-2-enyl diphosphate reductase">
    <location>
        <begin position="1"/>
        <end position="322"/>
    </location>
</feature>
<feature type="active site" description="Proton donor" evidence="1">
    <location>
        <position position="133"/>
    </location>
</feature>
<feature type="binding site" evidence="1">
    <location>
        <position position="12"/>
    </location>
    <ligand>
        <name>[4Fe-4S] cluster</name>
        <dbReference type="ChEBI" id="CHEBI:49883"/>
    </ligand>
</feature>
<feature type="binding site" evidence="1">
    <location>
        <position position="43"/>
    </location>
    <ligand>
        <name>(2E)-4-hydroxy-3-methylbut-2-enyl diphosphate</name>
        <dbReference type="ChEBI" id="CHEBI:128753"/>
    </ligand>
</feature>
<feature type="binding site" evidence="1">
    <location>
        <position position="43"/>
    </location>
    <ligand>
        <name>dimethylallyl diphosphate</name>
        <dbReference type="ChEBI" id="CHEBI:57623"/>
    </ligand>
</feature>
<feature type="binding site" evidence="1">
    <location>
        <position position="43"/>
    </location>
    <ligand>
        <name>isopentenyl diphosphate</name>
        <dbReference type="ChEBI" id="CHEBI:128769"/>
    </ligand>
</feature>
<feature type="binding site" evidence="1">
    <location>
        <position position="81"/>
    </location>
    <ligand>
        <name>(2E)-4-hydroxy-3-methylbut-2-enyl diphosphate</name>
        <dbReference type="ChEBI" id="CHEBI:128753"/>
    </ligand>
</feature>
<feature type="binding site" evidence="1">
    <location>
        <position position="81"/>
    </location>
    <ligand>
        <name>dimethylallyl diphosphate</name>
        <dbReference type="ChEBI" id="CHEBI:57623"/>
    </ligand>
</feature>
<feature type="binding site" evidence="1">
    <location>
        <position position="81"/>
    </location>
    <ligand>
        <name>isopentenyl diphosphate</name>
        <dbReference type="ChEBI" id="CHEBI:128769"/>
    </ligand>
</feature>
<feature type="binding site" evidence="1">
    <location>
        <position position="103"/>
    </location>
    <ligand>
        <name>[4Fe-4S] cluster</name>
        <dbReference type="ChEBI" id="CHEBI:49883"/>
    </ligand>
</feature>
<feature type="binding site" evidence="1">
    <location>
        <position position="131"/>
    </location>
    <ligand>
        <name>(2E)-4-hydroxy-3-methylbut-2-enyl diphosphate</name>
        <dbReference type="ChEBI" id="CHEBI:128753"/>
    </ligand>
</feature>
<feature type="binding site" evidence="1">
    <location>
        <position position="131"/>
    </location>
    <ligand>
        <name>dimethylallyl diphosphate</name>
        <dbReference type="ChEBI" id="CHEBI:57623"/>
    </ligand>
</feature>
<feature type="binding site" evidence="1">
    <location>
        <position position="131"/>
    </location>
    <ligand>
        <name>isopentenyl diphosphate</name>
        <dbReference type="ChEBI" id="CHEBI:128769"/>
    </ligand>
</feature>
<feature type="binding site" evidence="1">
    <location>
        <position position="172"/>
    </location>
    <ligand>
        <name>(2E)-4-hydroxy-3-methylbut-2-enyl diphosphate</name>
        <dbReference type="ChEBI" id="CHEBI:128753"/>
    </ligand>
</feature>
<feature type="binding site" evidence="1">
    <location>
        <position position="200"/>
    </location>
    <ligand>
        <name>[4Fe-4S] cluster</name>
        <dbReference type="ChEBI" id="CHEBI:49883"/>
    </ligand>
</feature>
<feature type="binding site" evidence="1">
    <location>
        <position position="228"/>
    </location>
    <ligand>
        <name>(2E)-4-hydroxy-3-methylbut-2-enyl diphosphate</name>
        <dbReference type="ChEBI" id="CHEBI:128753"/>
    </ligand>
</feature>
<feature type="binding site" evidence="1">
    <location>
        <position position="228"/>
    </location>
    <ligand>
        <name>dimethylallyl diphosphate</name>
        <dbReference type="ChEBI" id="CHEBI:57623"/>
    </ligand>
</feature>
<feature type="binding site" evidence="1">
    <location>
        <position position="228"/>
    </location>
    <ligand>
        <name>isopentenyl diphosphate</name>
        <dbReference type="ChEBI" id="CHEBI:128769"/>
    </ligand>
</feature>
<feature type="binding site" evidence="1">
    <location>
        <position position="230"/>
    </location>
    <ligand>
        <name>(2E)-4-hydroxy-3-methylbut-2-enyl diphosphate</name>
        <dbReference type="ChEBI" id="CHEBI:128753"/>
    </ligand>
</feature>
<feature type="binding site" evidence="1">
    <location>
        <position position="230"/>
    </location>
    <ligand>
        <name>dimethylallyl diphosphate</name>
        <dbReference type="ChEBI" id="CHEBI:57623"/>
    </ligand>
</feature>
<feature type="binding site" evidence="1">
    <location>
        <position position="230"/>
    </location>
    <ligand>
        <name>isopentenyl diphosphate</name>
        <dbReference type="ChEBI" id="CHEBI:128769"/>
    </ligand>
</feature>
<feature type="binding site" evidence="1">
    <location>
        <position position="273"/>
    </location>
    <ligand>
        <name>(2E)-4-hydroxy-3-methylbut-2-enyl diphosphate</name>
        <dbReference type="ChEBI" id="CHEBI:128753"/>
    </ligand>
</feature>
<feature type="binding site" evidence="1">
    <location>
        <position position="273"/>
    </location>
    <ligand>
        <name>dimethylallyl diphosphate</name>
        <dbReference type="ChEBI" id="CHEBI:57623"/>
    </ligand>
</feature>
<feature type="binding site" evidence="1">
    <location>
        <position position="273"/>
    </location>
    <ligand>
        <name>isopentenyl diphosphate</name>
        <dbReference type="ChEBI" id="CHEBI:128769"/>
    </ligand>
</feature>